<evidence type="ECO:0000250" key="1"/>
<evidence type="ECO:0000250" key="2">
    <source>
        <dbReference type="UniProtKB" id="Q57815"/>
    </source>
</evidence>
<evidence type="ECO:0000250" key="3">
    <source>
        <dbReference type="UniProtKB" id="Q9M4A2"/>
    </source>
</evidence>
<evidence type="ECO:0000255" key="4">
    <source>
        <dbReference type="PROSITE-ProRule" id="PRU01385"/>
    </source>
</evidence>
<evidence type="ECO:0000269" key="5">
    <source>
    </source>
</evidence>
<evidence type="ECO:0000269" key="6">
    <source>
    </source>
</evidence>
<evidence type="ECO:0000305" key="7"/>
<dbReference type="EC" id="5.6.2.2" evidence="3"/>
<dbReference type="EMBL" id="AJ549926">
    <property type="protein sequence ID" value="CAD71263.1"/>
    <property type="molecule type" value="mRNA"/>
</dbReference>
<dbReference type="EMBL" id="CM000128">
    <property type="protein sequence ID" value="EEC76191.1"/>
    <property type="molecule type" value="Genomic_DNA"/>
</dbReference>
<dbReference type="SMR" id="Q5ZPV8"/>
<dbReference type="STRING" id="39946.Q5ZPV8"/>
<dbReference type="EnsemblPlants" id="BGIOSGA013572-TA">
    <property type="protein sequence ID" value="BGIOSGA013572-PA"/>
    <property type="gene ID" value="BGIOSGA013572"/>
</dbReference>
<dbReference type="Gramene" id="BGIOSGA013572-TA">
    <property type="protein sequence ID" value="BGIOSGA013572-PA"/>
    <property type="gene ID" value="BGIOSGA013572"/>
</dbReference>
<dbReference type="HOGENOM" id="CLU_037229_1_1_1"/>
<dbReference type="OMA" id="IYYLDPV"/>
<dbReference type="Proteomes" id="UP000007015">
    <property type="component" value="Chromosome 3"/>
</dbReference>
<dbReference type="GO" id="GO:0000228">
    <property type="term" value="C:nuclear chromosome"/>
    <property type="evidence" value="ECO:0007669"/>
    <property type="project" value="TreeGrafter"/>
</dbReference>
<dbReference type="GO" id="GO:0005524">
    <property type="term" value="F:ATP binding"/>
    <property type="evidence" value="ECO:0007669"/>
    <property type="project" value="InterPro"/>
</dbReference>
<dbReference type="GO" id="GO:0003677">
    <property type="term" value="F:DNA binding"/>
    <property type="evidence" value="ECO:0007669"/>
    <property type="project" value="UniProtKB-KW"/>
</dbReference>
<dbReference type="GO" id="GO:0003918">
    <property type="term" value="F:DNA topoisomerase type II (double strand cut, ATP-hydrolyzing) activity"/>
    <property type="evidence" value="ECO:0007669"/>
    <property type="project" value="InterPro"/>
</dbReference>
<dbReference type="GO" id="GO:0046872">
    <property type="term" value="F:metal ion binding"/>
    <property type="evidence" value="ECO:0007669"/>
    <property type="project" value="UniProtKB-KW"/>
</dbReference>
<dbReference type="GO" id="GO:0051026">
    <property type="term" value="P:chiasma assembly"/>
    <property type="evidence" value="ECO:0007669"/>
    <property type="project" value="EnsemblPlants"/>
</dbReference>
<dbReference type="GO" id="GO:0000724">
    <property type="term" value="P:double-strand break repair via homologous recombination"/>
    <property type="evidence" value="ECO:0007669"/>
    <property type="project" value="EnsemblPlants"/>
</dbReference>
<dbReference type="GO" id="GO:0042138">
    <property type="term" value="P:meiotic DNA double-strand break formation"/>
    <property type="evidence" value="ECO:0007669"/>
    <property type="project" value="EnsemblPlants"/>
</dbReference>
<dbReference type="GO" id="GO:0000706">
    <property type="term" value="P:meiotic DNA double-strand break processing"/>
    <property type="evidence" value="ECO:0007669"/>
    <property type="project" value="TreeGrafter"/>
</dbReference>
<dbReference type="CDD" id="cd00223">
    <property type="entry name" value="TOPRIM_TopoIIB_SPO"/>
    <property type="match status" value="1"/>
</dbReference>
<dbReference type="FunFam" id="3.40.1360.10:FF:000003">
    <property type="entry name" value="DNA topoisomerase 6 subunit A"/>
    <property type="match status" value="1"/>
</dbReference>
<dbReference type="FunFam" id="1.10.10.10:FF:000778">
    <property type="entry name" value="Meiotic recombination protein SPO11-1"/>
    <property type="match status" value="1"/>
</dbReference>
<dbReference type="Gene3D" id="3.40.1360.10">
    <property type="match status" value="1"/>
</dbReference>
<dbReference type="Gene3D" id="1.10.10.10">
    <property type="entry name" value="Winged helix-like DNA-binding domain superfamily/Winged helix DNA-binding domain"/>
    <property type="match status" value="1"/>
</dbReference>
<dbReference type="InterPro" id="IPR013048">
    <property type="entry name" value="Meiotic_Spo11"/>
</dbReference>
<dbReference type="InterPro" id="IPR002815">
    <property type="entry name" value="Spo11/TopoVI_A"/>
</dbReference>
<dbReference type="InterPro" id="IPR013049">
    <property type="entry name" value="Spo11/TopoVI_A_N"/>
</dbReference>
<dbReference type="InterPro" id="IPR036078">
    <property type="entry name" value="Spo11/TopoVI_A_sf"/>
</dbReference>
<dbReference type="InterPro" id="IPR034136">
    <property type="entry name" value="TOPRIM_Topo6A/Spo11"/>
</dbReference>
<dbReference type="InterPro" id="IPR036388">
    <property type="entry name" value="WH-like_DNA-bd_sf"/>
</dbReference>
<dbReference type="PANTHER" id="PTHR10848">
    <property type="entry name" value="MEIOTIC RECOMBINATION PROTEIN SPO11"/>
    <property type="match status" value="1"/>
</dbReference>
<dbReference type="PANTHER" id="PTHR10848:SF3">
    <property type="entry name" value="MEIOTIC RECOMBINATION PROTEIN SPO11-1"/>
    <property type="match status" value="1"/>
</dbReference>
<dbReference type="Pfam" id="PF21180">
    <property type="entry name" value="TOP6A-Spo11_Toprim"/>
    <property type="match status" value="1"/>
</dbReference>
<dbReference type="Pfam" id="PF04406">
    <property type="entry name" value="TP6A_N"/>
    <property type="match status" value="1"/>
</dbReference>
<dbReference type="PRINTS" id="PR01551">
    <property type="entry name" value="SPO11HOMOLOG"/>
</dbReference>
<dbReference type="PRINTS" id="PR01550">
    <property type="entry name" value="TOP6AFAMILY"/>
</dbReference>
<dbReference type="SUPFAM" id="SSF56726">
    <property type="entry name" value="DNA topoisomerase IV, alpha subunit"/>
    <property type="match status" value="1"/>
</dbReference>
<dbReference type="PROSITE" id="PS52041">
    <property type="entry name" value="TOPO_IIB"/>
    <property type="match status" value="1"/>
</dbReference>
<name>SPO11_ORYSI</name>
<reference key="1">
    <citation type="journal article" date="2006" name="FEBS J.">
        <title>Overexpression of putative topoisomerase 6 genes from rice confers stress tolerance in transgenic Arabidopsis plants.</title>
        <authorList>
            <person name="Jain M."/>
            <person name="Tyagi A.K."/>
            <person name="Khurana J.P."/>
        </authorList>
    </citation>
    <scope>NUCLEOTIDE SEQUENCE [MRNA]</scope>
    <scope>TISSUE SPECIFICITY</scope>
    <source>
        <strain>cv. Pusa Basmati</strain>
    </source>
</reference>
<reference key="2">
    <citation type="journal article" date="2005" name="PLoS Biol.">
        <title>The genomes of Oryza sativa: a history of duplications.</title>
        <authorList>
            <person name="Yu J."/>
            <person name="Wang J."/>
            <person name="Lin W."/>
            <person name="Li S."/>
            <person name="Li H."/>
            <person name="Zhou J."/>
            <person name="Ni P."/>
            <person name="Dong W."/>
            <person name="Hu S."/>
            <person name="Zeng C."/>
            <person name="Zhang J."/>
            <person name="Zhang Y."/>
            <person name="Li R."/>
            <person name="Xu Z."/>
            <person name="Li S."/>
            <person name="Li X."/>
            <person name="Zheng H."/>
            <person name="Cong L."/>
            <person name="Lin L."/>
            <person name="Yin J."/>
            <person name="Geng J."/>
            <person name="Li G."/>
            <person name="Shi J."/>
            <person name="Liu J."/>
            <person name="Lv H."/>
            <person name="Li J."/>
            <person name="Wang J."/>
            <person name="Deng Y."/>
            <person name="Ran L."/>
            <person name="Shi X."/>
            <person name="Wang X."/>
            <person name="Wu Q."/>
            <person name="Li C."/>
            <person name="Ren X."/>
            <person name="Wang J."/>
            <person name="Wang X."/>
            <person name="Li D."/>
            <person name="Liu D."/>
            <person name="Zhang X."/>
            <person name="Ji Z."/>
            <person name="Zhao W."/>
            <person name="Sun Y."/>
            <person name="Zhang Z."/>
            <person name="Bao J."/>
            <person name="Han Y."/>
            <person name="Dong L."/>
            <person name="Ji J."/>
            <person name="Chen P."/>
            <person name="Wu S."/>
            <person name="Liu J."/>
            <person name="Xiao Y."/>
            <person name="Bu D."/>
            <person name="Tan J."/>
            <person name="Yang L."/>
            <person name="Ye C."/>
            <person name="Zhang J."/>
            <person name="Xu J."/>
            <person name="Zhou Y."/>
            <person name="Yu Y."/>
            <person name="Zhang B."/>
            <person name="Zhuang S."/>
            <person name="Wei H."/>
            <person name="Liu B."/>
            <person name="Lei M."/>
            <person name="Yu H."/>
            <person name="Li Y."/>
            <person name="Xu H."/>
            <person name="Wei S."/>
            <person name="He X."/>
            <person name="Fang L."/>
            <person name="Zhang Z."/>
            <person name="Zhang Y."/>
            <person name="Huang X."/>
            <person name="Su Z."/>
            <person name="Tong W."/>
            <person name="Li J."/>
            <person name="Tong Z."/>
            <person name="Li S."/>
            <person name="Ye J."/>
            <person name="Wang L."/>
            <person name="Fang L."/>
            <person name="Lei T."/>
            <person name="Chen C.-S."/>
            <person name="Chen H.-C."/>
            <person name="Xu Z."/>
            <person name="Li H."/>
            <person name="Huang H."/>
            <person name="Zhang F."/>
            <person name="Xu H."/>
            <person name="Li N."/>
            <person name="Zhao C."/>
            <person name="Li S."/>
            <person name="Dong L."/>
            <person name="Huang Y."/>
            <person name="Li L."/>
            <person name="Xi Y."/>
            <person name="Qi Q."/>
            <person name="Li W."/>
            <person name="Zhang B."/>
            <person name="Hu W."/>
            <person name="Zhang Y."/>
            <person name="Tian X."/>
            <person name="Jiao Y."/>
            <person name="Liang X."/>
            <person name="Jin J."/>
            <person name="Gao L."/>
            <person name="Zheng W."/>
            <person name="Hao B."/>
            <person name="Liu S.-M."/>
            <person name="Wang W."/>
            <person name="Yuan L."/>
            <person name="Cao M."/>
            <person name="McDermott J."/>
            <person name="Samudrala R."/>
            <person name="Wang J."/>
            <person name="Wong G.K.-S."/>
            <person name="Yang H."/>
        </authorList>
    </citation>
    <scope>NUCLEOTIDE SEQUENCE [LARGE SCALE GENOMIC DNA]</scope>
    <source>
        <strain>cv. 93-11</strain>
    </source>
</reference>
<reference key="3">
    <citation type="journal article" date="2008" name="Plant Cell Rep.">
        <title>Constitutive expression of a meiotic recombination protein gene homolog, OsTOP6A1, from rice confers abiotic stress tolerance in transgenic Arabidopsis plants.</title>
        <authorList>
            <person name="Jain M."/>
            <person name="Tyagi A.K."/>
            <person name="Khurana J.P."/>
        </authorList>
    </citation>
    <scope>FUNCTION</scope>
    <scope>SUBCELLULAR LOCATION</scope>
</reference>
<comment type="function">
    <text evidence="1 6">Required for meiotic recombination. Mediates DNA cleavage that forms the double-strand breaks (DSB) that initiate meiotic recombination (By similarity). May be involved in plant growth and development, and stress tolerance.</text>
</comment>
<comment type="catalytic activity">
    <reaction evidence="4">
        <text>ATP-dependent breakage, passage and rejoining of double-stranded DNA.</text>
        <dbReference type="EC" id="5.6.2.2"/>
    </reaction>
</comment>
<comment type="cofactor">
    <cofactor evidence="1 2">
        <name>Mg(2+)</name>
        <dbReference type="ChEBI" id="CHEBI:18420"/>
    </cofactor>
</comment>
<comment type="subcellular location">
    <subcellularLocation>
        <location evidence="6">Nucleus</location>
    </subcellularLocation>
</comment>
<comment type="tissue specificity">
    <text evidence="5">Highly expressed in flowers before pollination. Expressed in roots and shoots.</text>
</comment>
<comment type="similarity">
    <text evidence="7">Belongs to the TOP6A family.</text>
</comment>
<feature type="chain" id="PRO_0000429775" description="Meiotic recombination protein SPO11-1">
    <location>
        <begin position="1"/>
        <end position="381"/>
    </location>
</feature>
<feature type="domain" description="Topo IIA-type catalytic" evidence="4">
    <location>
        <begin position="23"/>
        <end position="162"/>
    </location>
</feature>
<feature type="active site" description="O-(5'-phospho-DNA)-tyrosine intermediate" evidence="4">
    <location>
        <position position="123"/>
    </location>
</feature>
<feature type="binding site" evidence="2">
    <location>
        <position position="209"/>
    </location>
    <ligand>
        <name>Mg(2+)</name>
        <dbReference type="ChEBI" id="CHEBI:18420"/>
    </ligand>
</feature>
<feature type="binding site" evidence="2">
    <location>
        <position position="261"/>
    </location>
    <ligand>
        <name>Mg(2+)</name>
        <dbReference type="ChEBI" id="CHEBI:18420"/>
    </ligand>
</feature>
<gene>
    <name type="primary">SPO11-1</name>
    <name type="ORF">OsI_13532</name>
</gene>
<organism>
    <name type="scientific">Oryza sativa subsp. indica</name>
    <name type="common">Rice</name>
    <dbReference type="NCBI Taxonomy" id="39946"/>
    <lineage>
        <taxon>Eukaryota</taxon>
        <taxon>Viridiplantae</taxon>
        <taxon>Streptophyta</taxon>
        <taxon>Embryophyta</taxon>
        <taxon>Tracheophyta</taxon>
        <taxon>Spermatophyta</taxon>
        <taxon>Magnoliopsida</taxon>
        <taxon>Liliopsida</taxon>
        <taxon>Poales</taxon>
        <taxon>Poaceae</taxon>
        <taxon>BOP clade</taxon>
        <taxon>Oryzoideae</taxon>
        <taxon>Oryzeae</taxon>
        <taxon>Oryzinae</taxon>
        <taxon>Oryza</taxon>
        <taxon>Oryza sativa</taxon>
    </lineage>
</organism>
<accession>Q5ZPV8</accession>
<proteinExistence type="evidence at transcript level"/>
<sequence>MAGREKRRRVAALDGEERRRRQEEAATLLHRIRGLVRWVVAEVAAGRSPTVALHRYQNYCSSASAAAASPCACSYDVPVGTDVLSLLHRGSHASRLNVLLRVLLVVQQLLQQNKHCSKRDIYYMYPSIFQEQAVVDRAINDICVLFKCSRHNLNVVPVAKGLVMGWIRFLEGEKEVYCVTNVNAAFSIPVSIEAIKDVVSVADYILIVEKETVFQRLANDKFCERNRCIVITGRGYPDIPTRRFLRYLVEQLHLPVYCLVDADPYGFDILATYKFGSLQLAYDANFLRVPDIRWLGVFTSDFEDYRLPDCCLLHLSSEDRRKAEGILSRCYLHREAPQWRLELEAMLQKGVKFEIEALSACSISFLSEEYIPKKIKQGRHI</sequence>
<protein>
    <recommendedName>
        <fullName>Meiotic recombination protein SPO11-1</fullName>
        <shortName>OsSPO11-1</shortName>
        <ecNumber evidence="3">5.6.2.2</ecNumber>
    </recommendedName>
    <alternativeName>
        <fullName>Topoisomerase VI subunit A1</fullName>
        <shortName>OsTOP6A1</shortName>
    </alternativeName>
</protein>
<keyword id="KW-0238">DNA-binding</keyword>
<keyword id="KW-0413">Isomerase</keyword>
<keyword id="KW-0460">Magnesium</keyword>
<keyword id="KW-0479">Metal-binding</keyword>
<keyword id="KW-0539">Nucleus</keyword>
<keyword id="KW-1185">Reference proteome</keyword>
<keyword id="KW-0799">Topoisomerase</keyword>